<dbReference type="EMBL" id="M82923">
    <property type="protein sequence ID" value="AAA34045.1"/>
    <property type="molecule type" value="mRNA"/>
</dbReference>
<dbReference type="EMBL" id="X66135">
    <property type="protein sequence ID" value="CAA46927.1"/>
    <property type="molecule type" value="Genomic_DNA"/>
</dbReference>
<dbReference type="EMBL" id="KQ148526">
    <property type="protein sequence ID" value="KNA15241.1"/>
    <property type="molecule type" value="Genomic_DNA"/>
</dbReference>
<dbReference type="PIR" id="A44121">
    <property type="entry name" value="A44121"/>
</dbReference>
<dbReference type="PDB" id="5X8P">
    <property type="method" value="EM"/>
    <property type="resolution" value="3.40 A"/>
    <property type="chains" value="8=42-411"/>
</dbReference>
<dbReference type="PDB" id="5X8R">
    <property type="method" value="EM"/>
    <property type="resolution" value="3.70 A"/>
    <property type="chains" value="8=42-411"/>
</dbReference>
<dbReference type="PDBsum" id="5X8P"/>
<dbReference type="PDBsum" id="5X8R"/>
<dbReference type="EMDB" id="EMD-6709"/>
<dbReference type="EMDB" id="EMD-6710"/>
<dbReference type="SMR" id="P29344"/>
<dbReference type="STRING" id="3562.P29344"/>
<dbReference type="OrthoDB" id="412781at2759"/>
<dbReference type="Proteomes" id="UP001155700">
    <property type="component" value="Unplaced"/>
</dbReference>
<dbReference type="GO" id="GO:0009570">
    <property type="term" value="C:chloroplast stroma"/>
    <property type="evidence" value="ECO:0007669"/>
    <property type="project" value="TreeGrafter"/>
</dbReference>
<dbReference type="GO" id="GO:1990904">
    <property type="term" value="C:ribonucleoprotein complex"/>
    <property type="evidence" value="ECO:0007669"/>
    <property type="project" value="UniProtKB-KW"/>
</dbReference>
<dbReference type="GO" id="GO:0005840">
    <property type="term" value="C:ribosome"/>
    <property type="evidence" value="ECO:0007669"/>
    <property type="project" value="UniProtKB-KW"/>
</dbReference>
<dbReference type="GO" id="GO:0003729">
    <property type="term" value="F:mRNA binding"/>
    <property type="evidence" value="ECO:0000318"/>
    <property type="project" value="GO_Central"/>
</dbReference>
<dbReference type="GO" id="GO:0003735">
    <property type="term" value="F:structural constituent of ribosome"/>
    <property type="evidence" value="ECO:0000318"/>
    <property type="project" value="GO_Central"/>
</dbReference>
<dbReference type="GO" id="GO:0006412">
    <property type="term" value="P:translation"/>
    <property type="evidence" value="ECO:0000318"/>
    <property type="project" value="GO_Central"/>
</dbReference>
<dbReference type="CDD" id="cd05687">
    <property type="entry name" value="S1_RPS1_repeat_ec1_hs1"/>
    <property type="match status" value="1"/>
</dbReference>
<dbReference type="CDD" id="cd04465">
    <property type="entry name" value="S1_RPS1_repeat_ec2_hs2"/>
    <property type="match status" value="1"/>
</dbReference>
<dbReference type="CDD" id="cd05692">
    <property type="entry name" value="S1_RPS1_repeat_hs4"/>
    <property type="match status" value="1"/>
</dbReference>
<dbReference type="FunFam" id="2.40.50.140:FF:000078">
    <property type="entry name" value="30S ribosomal protein S1"/>
    <property type="match status" value="1"/>
</dbReference>
<dbReference type="FunFam" id="2.40.50.140:FF:000102">
    <property type="entry name" value="30S ribosomal protein S1"/>
    <property type="match status" value="1"/>
</dbReference>
<dbReference type="FunFam" id="2.40.50.140:FF:000162">
    <property type="entry name" value="30S ribosomal protein S1, chloroplastic"/>
    <property type="match status" value="1"/>
</dbReference>
<dbReference type="Gene3D" id="2.40.50.140">
    <property type="entry name" value="Nucleic acid-binding proteins"/>
    <property type="match status" value="3"/>
</dbReference>
<dbReference type="InterPro" id="IPR012340">
    <property type="entry name" value="NA-bd_OB-fold"/>
</dbReference>
<dbReference type="InterPro" id="IPR050437">
    <property type="entry name" value="Ribos_protein_bS1-like"/>
</dbReference>
<dbReference type="InterPro" id="IPR035104">
    <property type="entry name" value="Ribosomal_protein_S1-like"/>
</dbReference>
<dbReference type="InterPro" id="IPR003029">
    <property type="entry name" value="S1_domain"/>
</dbReference>
<dbReference type="PANTHER" id="PTHR10724">
    <property type="entry name" value="30S RIBOSOMAL PROTEIN S1"/>
    <property type="match status" value="1"/>
</dbReference>
<dbReference type="PANTHER" id="PTHR10724:SF7">
    <property type="entry name" value="SMALL RIBOSOMAL SUBUNIT PROTEIN BS1C"/>
    <property type="match status" value="1"/>
</dbReference>
<dbReference type="Pfam" id="PF00575">
    <property type="entry name" value="S1"/>
    <property type="match status" value="2"/>
</dbReference>
<dbReference type="PRINTS" id="PR00681">
    <property type="entry name" value="RIBOSOMALS1"/>
</dbReference>
<dbReference type="SMART" id="SM00316">
    <property type="entry name" value="S1"/>
    <property type="match status" value="3"/>
</dbReference>
<dbReference type="SUPFAM" id="SSF50249">
    <property type="entry name" value="Nucleic acid-binding proteins"/>
    <property type="match status" value="3"/>
</dbReference>
<dbReference type="PROSITE" id="PS50126">
    <property type="entry name" value="S1"/>
    <property type="match status" value="3"/>
</dbReference>
<organism>
    <name type="scientific">Spinacia oleracea</name>
    <name type="common">Spinach</name>
    <dbReference type="NCBI Taxonomy" id="3562"/>
    <lineage>
        <taxon>Eukaryota</taxon>
        <taxon>Viridiplantae</taxon>
        <taxon>Streptophyta</taxon>
        <taxon>Embryophyta</taxon>
        <taxon>Tracheophyta</taxon>
        <taxon>Spermatophyta</taxon>
        <taxon>Magnoliopsida</taxon>
        <taxon>eudicotyledons</taxon>
        <taxon>Gunneridae</taxon>
        <taxon>Pentapetalae</taxon>
        <taxon>Caryophyllales</taxon>
        <taxon>Chenopodiaceae</taxon>
        <taxon>Chenopodioideae</taxon>
        <taxon>Anserineae</taxon>
        <taxon>Spinacia</taxon>
    </lineage>
</organism>
<gene>
    <name type="primary">RPS1</name>
    <name type="ORF">SOVF_099990</name>
</gene>
<keyword id="KW-0002">3D-structure</keyword>
<keyword id="KW-0150">Chloroplast</keyword>
<keyword id="KW-0903">Direct protein sequencing</keyword>
<keyword id="KW-0934">Plastid</keyword>
<keyword id="KW-1185">Reference proteome</keyword>
<keyword id="KW-0677">Repeat</keyword>
<keyword id="KW-0687">Ribonucleoprotein</keyword>
<keyword id="KW-0689">Ribosomal protein</keyword>
<keyword id="KW-0694">RNA-binding</keyword>
<keyword id="KW-0809">Transit peptide</keyword>
<name>RR1_SPIOL</name>
<protein>
    <recommendedName>
        <fullName evidence="6">Small ribosomal subunit protein bS1c</fullName>
    </recommendedName>
    <alternativeName>
        <fullName evidence="5">30S ribosomal protein S1, chloroplastic</fullName>
    </alternativeName>
    <alternativeName>
        <fullName>CS1</fullName>
    </alternativeName>
</protein>
<reference key="1">
    <citation type="journal article" date="1992" name="J. Biol. Chem.">
        <title>Characterization and RNA-binding properties of a chloroplast S1-like ribosomal protein.</title>
        <authorList>
            <person name="Franzetti B."/>
            <person name="Carol P."/>
            <person name="Mache R."/>
        </authorList>
    </citation>
    <scope>NUCLEOTIDE SEQUENCE [MRNA]</scope>
</reference>
<reference key="2">
    <citation type="journal article" date="1992" name="Nucleic Acids Res.">
        <title>Structure and expression of the nuclear gene coding for the plastid CS1 ribosomal protein from spinach.</title>
        <authorList>
            <person name="Franzetti B."/>
            <person name="Zhou D.-X."/>
            <person name="Mache R."/>
        </authorList>
    </citation>
    <scope>NUCLEOTIDE SEQUENCE [GENOMIC DNA]</scope>
    <source>
        <strain>cv. Geant d'hiver</strain>
        <tissue>Leaf</tissue>
    </source>
</reference>
<reference key="3">
    <citation type="journal article" date="2014" name="Nature">
        <title>The genome of the recently domesticated crop plant sugar beet (Beta vulgaris).</title>
        <authorList>
            <person name="Dohm J.C."/>
            <person name="Minoche A.E."/>
            <person name="Holtgraewe D."/>
            <person name="Capella-Gutierrez S."/>
            <person name="Zakrzewski F."/>
            <person name="Tafer H."/>
            <person name="Rupp O."/>
            <person name="Soerensen T.R."/>
            <person name="Stracke R."/>
            <person name="Reinhardt R."/>
            <person name="Goesmann A."/>
            <person name="Kraft T."/>
            <person name="Schulz B."/>
            <person name="Stadler P.F."/>
            <person name="Schmidt T."/>
            <person name="Gabaldon T."/>
            <person name="Lehrach H."/>
            <person name="Weisshaar B."/>
            <person name="Himmelbauer H."/>
        </authorList>
    </citation>
    <scope>NUCLEOTIDE SEQUENCE [LARGE SCALE GENOMIC DNA]</scope>
    <source>
        <strain>cv. Viroflay</strain>
        <tissue>Leaf</tissue>
    </source>
</reference>
<reference key="4">
    <citation type="journal article" date="2000" name="J. Biol. Chem.">
        <title>The plastid ribosomal proteins. Identification of all the proteins in the 30S subunit of an organelle ribosome (chloroplast).</title>
        <authorList>
            <person name="Yamaguchi K."/>
            <person name="von Knoblauch K."/>
            <person name="Subramanian A.R."/>
        </authorList>
    </citation>
    <scope>PROTEIN SEQUENCE OF 42-51</scope>
    <scope>SUBUNIT</scope>
    <scope>SUBCELLULAR LOCATION</scope>
    <scope>MASS SPECTROMETRY</scope>
    <source>
        <strain>cv. Alwaro</strain>
        <tissue>Leaf</tissue>
    </source>
</reference>
<reference key="5">
    <citation type="journal article" date="2017" name="EMBO J.">
        <title>The complete structure of the chloroplast 70S ribosome in complex with translation factor pY.</title>
        <authorList>
            <person name="Bieri P."/>
            <person name="Leibundgut M."/>
            <person name="Saurer M."/>
            <person name="Boehringer D."/>
            <person name="Ban N."/>
        </authorList>
    </citation>
    <scope>STRUCTURE BY ELECTRON MICROSCOPY (3.40 ANGSTROMS)</scope>
    <scope>SUBUNIT</scope>
    <scope>SUBCELLULAR LOCATION</scope>
</reference>
<proteinExistence type="evidence at protein level"/>
<evidence type="ECO:0000255" key="1">
    <source>
        <dbReference type="PROSITE-ProRule" id="PRU00180"/>
    </source>
</evidence>
<evidence type="ECO:0000269" key="2">
    <source>
    </source>
</evidence>
<evidence type="ECO:0000269" key="3">
    <source>
    </source>
</evidence>
<evidence type="ECO:0000269" key="4">
    <source>
    </source>
</evidence>
<evidence type="ECO:0000303" key="5">
    <source>
    </source>
</evidence>
<evidence type="ECO:0000303" key="6">
    <source>
    </source>
</evidence>
<evidence type="ECO:0000305" key="7"/>
<evidence type="ECO:0000305" key="8">
    <source>
    </source>
</evidence>
<evidence type="ECO:0000305" key="9">
    <source>
    </source>
</evidence>
<feature type="transit peptide" description="Chloroplast" evidence="2">
    <location>
        <begin position="1"/>
        <end position="41"/>
    </location>
</feature>
<feature type="chain" id="PRO_0000030632" description="Small ribosomal subunit protein bS1c">
    <location>
        <begin position="42"/>
        <end position="411"/>
    </location>
</feature>
<feature type="domain" description="S1 motif 1" evidence="1">
    <location>
        <begin position="96"/>
        <end position="166"/>
    </location>
</feature>
<feature type="domain" description="S1 motif 2" evidence="1">
    <location>
        <begin position="184"/>
        <end position="248"/>
    </location>
</feature>
<feature type="domain" description="S1 motif 3" evidence="1">
    <location>
        <begin position="261"/>
        <end position="329"/>
    </location>
</feature>
<accession>P29344</accession>
<accession>A0A0K9R6V0</accession>
<accession>P82132</accession>
<accession>P82133</accession>
<sequence length="411" mass="44787">MASLAQQLAGGLRCPPLSNSNLSKPFSPKHTLKPRFSPIVSAVAVSNAQTRERQKLKQLFEDAYERCRNAPMEGVSFTIDDFHTALDKYDFNSEMGSRVKGTVFCTDANGALVDITAKSSAYLPLAEACIYRIKNVEEAGIIPGVREEFVIIGENEADDSLILSLRQIQYELAWERCRQLQAEDVVVKGKIVGANKGGVVALVEGLRGFVPFSQISSKSSAEELLEKEIPLKFVEVDEEQSRLVMSNRKAMADSQAQLGIGSVVTGTVQSLKPYGAFIDIGGINGLLHVSQISHDRVSDIATVLQPGDTLKVMILSHDRERGRVSLSTKKLEPTPGDMIRNPKLVFEKAEEMAQTFRQRIAQAEAMARADMLRFQPESGLTLSSDGILGPLTSDLPAEGLDLSVVPPAVES</sequence>
<comment type="function">
    <text evidence="3 8 9">Component of the chloroplast ribosome (chloro-ribosome), a dedicated translation machinery responsible for the synthesis of chloroplast genome-encoded proteins, including proteins of the transcription and translation machinery and components of the photosynthetic apparatus (PubMed:10874039, PubMed:28007896). Actively engaged in the initiation complex formation via a strong mRNA-binding activity. Possesses a poly(A)-binding activity which might play a role as a control element in chloroplast mRNA translation (PubMed:1527032).</text>
</comment>
<comment type="subunit">
    <text evidence="2 4">Component of the chloroplast small ribosomal subunit (SSU). Mature 70S chloroplast ribosomes of higher plants consist of a small (30S) and a large (50S) subunit. The 30S small subunit contains 1 molecule of ribosomal RNA (16S rRNA) and 24 different proteins. The 50S large subunit contains 3 rRNA molecules (23S, 5S and 4.5S rRNA) and 33 different proteins.</text>
</comment>
<comment type="subcellular location">
    <subcellularLocation>
        <location evidence="2 4">Plastid</location>
        <location evidence="2 4">Chloroplast</location>
    </subcellularLocation>
</comment>
<comment type="mass spectrometry" mass="40900.0" method="MALDI" evidence="2">
    <text>S1 alpha form.</text>
</comment>
<comment type="mass spectrometry" mass="36890.0" method="MALDI" evidence="2">
    <text>S1 beta form.</text>
</comment>
<comment type="miscellaneous">
    <text>Two different forms exist, S1 alpha and S1 beta.</text>
</comment>
<comment type="similarity">
    <text evidence="7">Belongs to the bacterial ribosomal protein bS1 family.</text>
</comment>